<proteinExistence type="inferred from homology"/>
<evidence type="ECO:0000255" key="1">
    <source>
        <dbReference type="HAMAP-Rule" id="MF_00358"/>
    </source>
</evidence>
<evidence type="ECO:0000256" key="2">
    <source>
        <dbReference type="SAM" id="MobiDB-lite"/>
    </source>
</evidence>
<evidence type="ECO:0000305" key="3"/>
<name>RS21_LIGS1</name>
<sequence>MSKTVVRKNESLDDALRRFKRSVSKTGTLQEYRKREFYEKPSVKRKKKSEAARKRKNKRRF</sequence>
<feature type="chain" id="PRO_0000266696" description="Small ribosomal subunit protein bS21">
    <location>
        <begin position="1"/>
        <end position="61"/>
    </location>
</feature>
<feature type="region of interest" description="Disordered" evidence="2">
    <location>
        <begin position="40"/>
        <end position="61"/>
    </location>
</feature>
<feature type="compositionally biased region" description="Basic residues" evidence="2">
    <location>
        <begin position="43"/>
        <end position="61"/>
    </location>
</feature>
<comment type="similarity">
    <text evidence="1">Belongs to the bacterial ribosomal protein bS21 family.</text>
</comment>
<gene>
    <name evidence="1" type="primary">rpsU</name>
    <name type="ordered locus">LSL_0700</name>
</gene>
<accession>Q1WU25</accession>
<organism>
    <name type="scientific">Ligilactobacillus salivarius (strain UCC118)</name>
    <name type="common">Lactobacillus salivarius</name>
    <dbReference type="NCBI Taxonomy" id="362948"/>
    <lineage>
        <taxon>Bacteria</taxon>
        <taxon>Bacillati</taxon>
        <taxon>Bacillota</taxon>
        <taxon>Bacilli</taxon>
        <taxon>Lactobacillales</taxon>
        <taxon>Lactobacillaceae</taxon>
        <taxon>Ligilactobacillus</taxon>
    </lineage>
</organism>
<dbReference type="EMBL" id="CP000233">
    <property type="protein sequence ID" value="ABD99510.1"/>
    <property type="molecule type" value="Genomic_DNA"/>
</dbReference>
<dbReference type="RefSeq" id="WP_003694124.1">
    <property type="nucleotide sequence ID" value="NC_007929.1"/>
</dbReference>
<dbReference type="RefSeq" id="YP_535593.1">
    <property type="nucleotide sequence ID" value="NC_007929.1"/>
</dbReference>
<dbReference type="SMR" id="Q1WU25"/>
<dbReference type="STRING" id="362948.LSL_0700"/>
<dbReference type="GeneID" id="98307608"/>
<dbReference type="KEGG" id="lsl:LSL_0700"/>
<dbReference type="PATRIC" id="fig|362948.14.peg.779"/>
<dbReference type="HOGENOM" id="CLU_159258_3_2_9"/>
<dbReference type="OrthoDB" id="9799244at2"/>
<dbReference type="Proteomes" id="UP000006559">
    <property type="component" value="Chromosome"/>
</dbReference>
<dbReference type="GO" id="GO:1990904">
    <property type="term" value="C:ribonucleoprotein complex"/>
    <property type="evidence" value="ECO:0007669"/>
    <property type="project" value="UniProtKB-KW"/>
</dbReference>
<dbReference type="GO" id="GO:0005840">
    <property type="term" value="C:ribosome"/>
    <property type="evidence" value="ECO:0007669"/>
    <property type="project" value="UniProtKB-KW"/>
</dbReference>
<dbReference type="GO" id="GO:0003735">
    <property type="term" value="F:structural constituent of ribosome"/>
    <property type="evidence" value="ECO:0007669"/>
    <property type="project" value="InterPro"/>
</dbReference>
<dbReference type="GO" id="GO:0006412">
    <property type="term" value="P:translation"/>
    <property type="evidence" value="ECO:0007669"/>
    <property type="project" value="UniProtKB-UniRule"/>
</dbReference>
<dbReference type="Gene3D" id="1.20.5.1150">
    <property type="entry name" value="Ribosomal protein S8"/>
    <property type="match status" value="1"/>
</dbReference>
<dbReference type="HAMAP" id="MF_00358">
    <property type="entry name" value="Ribosomal_bS21"/>
    <property type="match status" value="1"/>
</dbReference>
<dbReference type="InterPro" id="IPR001911">
    <property type="entry name" value="Ribosomal_bS21"/>
</dbReference>
<dbReference type="InterPro" id="IPR018278">
    <property type="entry name" value="Ribosomal_bS21_CS"/>
</dbReference>
<dbReference type="InterPro" id="IPR038380">
    <property type="entry name" value="Ribosomal_bS21_sf"/>
</dbReference>
<dbReference type="NCBIfam" id="TIGR00030">
    <property type="entry name" value="S21p"/>
    <property type="match status" value="1"/>
</dbReference>
<dbReference type="PANTHER" id="PTHR21109">
    <property type="entry name" value="MITOCHONDRIAL 28S RIBOSOMAL PROTEIN S21"/>
    <property type="match status" value="1"/>
</dbReference>
<dbReference type="PANTHER" id="PTHR21109:SF22">
    <property type="entry name" value="SMALL RIBOSOMAL SUBUNIT PROTEIN BS21"/>
    <property type="match status" value="1"/>
</dbReference>
<dbReference type="Pfam" id="PF01165">
    <property type="entry name" value="Ribosomal_S21"/>
    <property type="match status" value="1"/>
</dbReference>
<dbReference type="PRINTS" id="PR00976">
    <property type="entry name" value="RIBOSOMALS21"/>
</dbReference>
<dbReference type="PROSITE" id="PS01181">
    <property type="entry name" value="RIBOSOMAL_S21"/>
    <property type="match status" value="1"/>
</dbReference>
<reference key="1">
    <citation type="journal article" date="2006" name="Proc. Natl. Acad. Sci. U.S.A.">
        <title>Multireplicon genome architecture of Lactobacillus salivarius.</title>
        <authorList>
            <person name="Claesson M.J."/>
            <person name="Li Y."/>
            <person name="Leahy S."/>
            <person name="Canchaya C."/>
            <person name="van Pijkeren J.P."/>
            <person name="Cerdeno-Tarraga A.M."/>
            <person name="Parkhill J."/>
            <person name="Flynn S."/>
            <person name="O'Sullivan G.C."/>
            <person name="Collins J.K."/>
            <person name="Higgins D."/>
            <person name="Shanahan F."/>
            <person name="Fitzgerald G.F."/>
            <person name="van Sinderen D."/>
            <person name="O'Toole P.W."/>
        </authorList>
    </citation>
    <scope>NUCLEOTIDE SEQUENCE [LARGE SCALE GENOMIC DNA]</scope>
    <source>
        <strain>UCC118</strain>
    </source>
</reference>
<protein>
    <recommendedName>
        <fullName evidence="1">Small ribosomal subunit protein bS21</fullName>
    </recommendedName>
    <alternativeName>
        <fullName evidence="3">30S ribosomal protein S21</fullName>
    </alternativeName>
</protein>
<keyword id="KW-1185">Reference proteome</keyword>
<keyword id="KW-0687">Ribonucleoprotein</keyword>
<keyword id="KW-0689">Ribosomal protein</keyword>